<reference key="1">
    <citation type="journal article" date="2002" name="J. Bacteriol.">
        <title>Whole-genome comparison of Mycobacterium tuberculosis clinical and laboratory strains.</title>
        <authorList>
            <person name="Fleischmann R.D."/>
            <person name="Alland D."/>
            <person name="Eisen J.A."/>
            <person name="Carpenter L."/>
            <person name="White O."/>
            <person name="Peterson J.D."/>
            <person name="DeBoy R.T."/>
            <person name="Dodson R.J."/>
            <person name="Gwinn M.L."/>
            <person name="Haft D.H."/>
            <person name="Hickey E.K."/>
            <person name="Kolonay J.F."/>
            <person name="Nelson W.C."/>
            <person name="Umayam L.A."/>
            <person name="Ermolaeva M.D."/>
            <person name="Salzberg S.L."/>
            <person name="Delcher A."/>
            <person name="Utterback T.R."/>
            <person name="Weidman J.F."/>
            <person name="Khouri H.M."/>
            <person name="Gill J."/>
            <person name="Mikula A."/>
            <person name="Bishai W."/>
            <person name="Jacobs W.R. Jr."/>
            <person name="Venter J.C."/>
            <person name="Fraser C.M."/>
        </authorList>
    </citation>
    <scope>NUCLEOTIDE SEQUENCE [LARGE SCALE GENOMIC DNA]</scope>
    <source>
        <strain>CDC 1551 / Oshkosh</strain>
    </source>
</reference>
<name>RL35_MYCTO</name>
<protein>
    <recommendedName>
        <fullName evidence="1">Large ribosomal subunit protein bL35</fullName>
    </recommendedName>
    <alternativeName>
        <fullName evidence="3">50S ribosomal protein L35</fullName>
    </alternativeName>
</protein>
<keyword id="KW-1185">Reference proteome</keyword>
<keyword id="KW-0687">Ribonucleoprotein</keyword>
<keyword id="KW-0689">Ribosomal protein</keyword>
<evidence type="ECO:0000255" key="1">
    <source>
        <dbReference type="HAMAP-Rule" id="MF_00514"/>
    </source>
</evidence>
<evidence type="ECO:0000256" key="2">
    <source>
        <dbReference type="SAM" id="MobiDB-lite"/>
    </source>
</evidence>
<evidence type="ECO:0000305" key="3"/>
<dbReference type="EMBL" id="AE000516">
    <property type="protein sequence ID" value="AAK45949.1"/>
    <property type="molecule type" value="Genomic_DNA"/>
</dbReference>
<dbReference type="PIR" id="E70619">
    <property type="entry name" value="E70619"/>
</dbReference>
<dbReference type="RefSeq" id="WP_003408106.1">
    <property type="nucleotide sequence ID" value="NZ_KK341227.1"/>
</dbReference>
<dbReference type="SMR" id="P9WH90"/>
<dbReference type="GeneID" id="45425612"/>
<dbReference type="KEGG" id="mtc:MT1680"/>
<dbReference type="PATRIC" id="fig|83331.31.peg.1806"/>
<dbReference type="HOGENOM" id="CLU_169643_4_2_11"/>
<dbReference type="Proteomes" id="UP000001020">
    <property type="component" value="Chromosome"/>
</dbReference>
<dbReference type="GO" id="GO:0022625">
    <property type="term" value="C:cytosolic large ribosomal subunit"/>
    <property type="evidence" value="ECO:0007669"/>
    <property type="project" value="TreeGrafter"/>
</dbReference>
<dbReference type="GO" id="GO:0003735">
    <property type="term" value="F:structural constituent of ribosome"/>
    <property type="evidence" value="ECO:0007669"/>
    <property type="project" value="InterPro"/>
</dbReference>
<dbReference type="GO" id="GO:0006412">
    <property type="term" value="P:translation"/>
    <property type="evidence" value="ECO:0007669"/>
    <property type="project" value="UniProtKB-UniRule"/>
</dbReference>
<dbReference type="FunFam" id="4.10.410.60:FF:000001">
    <property type="entry name" value="50S ribosomal protein L35"/>
    <property type="match status" value="1"/>
</dbReference>
<dbReference type="Gene3D" id="4.10.410.60">
    <property type="match status" value="1"/>
</dbReference>
<dbReference type="HAMAP" id="MF_00514">
    <property type="entry name" value="Ribosomal_bL35"/>
    <property type="match status" value="1"/>
</dbReference>
<dbReference type="InterPro" id="IPR001706">
    <property type="entry name" value="Ribosomal_bL35"/>
</dbReference>
<dbReference type="InterPro" id="IPR021137">
    <property type="entry name" value="Ribosomal_bL35-like"/>
</dbReference>
<dbReference type="InterPro" id="IPR018265">
    <property type="entry name" value="Ribosomal_bL35_CS"/>
</dbReference>
<dbReference type="InterPro" id="IPR037229">
    <property type="entry name" value="Ribosomal_bL35_sf"/>
</dbReference>
<dbReference type="NCBIfam" id="TIGR00001">
    <property type="entry name" value="rpmI_bact"/>
    <property type="match status" value="1"/>
</dbReference>
<dbReference type="PANTHER" id="PTHR33343">
    <property type="entry name" value="54S RIBOSOMAL PROTEIN BL35M"/>
    <property type="match status" value="1"/>
</dbReference>
<dbReference type="PANTHER" id="PTHR33343:SF1">
    <property type="entry name" value="LARGE RIBOSOMAL SUBUNIT PROTEIN BL35M"/>
    <property type="match status" value="1"/>
</dbReference>
<dbReference type="Pfam" id="PF01632">
    <property type="entry name" value="Ribosomal_L35p"/>
    <property type="match status" value="1"/>
</dbReference>
<dbReference type="PRINTS" id="PR00064">
    <property type="entry name" value="RIBOSOMALL35"/>
</dbReference>
<dbReference type="SUPFAM" id="SSF143034">
    <property type="entry name" value="L35p-like"/>
    <property type="match status" value="1"/>
</dbReference>
<dbReference type="PROSITE" id="PS00936">
    <property type="entry name" value="RIBOSOMAL_L35"/>
    <property type="match status" value="1"/>
</dbReference>
<organism>
    <name type="scientific">Mycobacterium tuberculosis (strain CDC 1551 / Oshkosh)</name>
    <dbReference type="NCBI Taxonomy" id="83331"/>
    <lineage>
        <taxon>Bacteria</taxon>
        <taxon>Bacillati</taxon>
        <taxon>Actinomycetota</taxon>
        <taxon>Actinomycetes</taxon>
        <taxon>Mycobacteriales</taxon>
        <taxon>Mycobacteriaceae</taxon>
        <taxon>Mycobacterium</taxon>
        <taxon>Mycobacterium tuberculosis complex</taxon>
    </lineage>
</organism>
<comment type="similarity">
    <text evidence="1">Belongs to the bacterial ribosomal protein bL35 family.</text>
</comment>
<feature type="chain" id="PRO_0000428228" description="Large ribosomal subunit protein bL35">
    <location>
        <begin position="1"/>
        <end position="64"/>
    </location>
</feature>
<feature type="region of interest" description="Disordered" evidence="2">
    <location>
        <begin position="1"/>
        <end position="22"/>
    </location>
</feature>
<gene>
    <name evidence="1" type="primary">rpmI</name>
    <name type="ordered locus">MT1680</name>
</gene>
<accession>P9WH90</accession>
<accession>L0T7I2</accession>
<accession>P66271</accession>
<accession>P94976</accession>
<sequence length="64" mass="7220">MPKAKTHSGASKRFRRTGTGKIVRQKANRRHLLEHKPSTRTRRLDGRTVVAANDTKRVTSLLNG</sequence>
<proteinExistence type="inferred from homology"/>